<evidence type="ECO:0000250" key="1">
    <source>
        <dbReference type="UniProtKB" id="O54963"/>
    </source>
</evidence>
<evidence type="ECO:0000250" key="2">
    <source>
        <dbReference type="UniProtKB" id="Q13127"/>
    </source>
</evidence>
<evidence type="ECO:0000255" key="3">
    <source>
        <dbReference type="PROSITE-ProRule" id="PRU00042"/>
    </source>
</evidence>
<evidence type="ECO:0000256" key="4">
    <source>
        <dbReference type="SAM" id="MobiDB-lite"/>
    </source>
</evidence>
<evidence type="ECO:0000269" key="5">
    <source>
    </source>
</evidence>
<evidence type="ECO:0000269" key="6">
    <source>
    </source>
</evidence>
<evidence type="ECO:0000269" key="7">
    <source>
    </source>
</evidence>
<evidence type="ECO:0000269" key="8">
    <source>
    </source>
</evidence>
<evidence type="ECO:0000269" key="9">
    <source>
    </source>
</evidence>
<evidence type="ECO:0000269" key="10">
    <source>
    </source>
</evidence>
<evidence type="ECO:0000269" key="11">
    <source>
    </source>
</evidence>
<evidence type="ECO:0000269" key="12">
    <source>
    </source>
</evidence>
<evidence type="ECO:0000269" key="13">
    <source>
    </source>
</evidence>
<evidence type="ECO:0000269" key="14">
    <source>
    </source>
</evidence>
<evidence type="ECO:0000269" key="15">
    <source>
    </source>
</evidence>
<evidence type="ECO:0000269" key="16">
    <source>
    </source>
</evidence>
<evidence type="ECO:0000303" key="17">
    <source ref="2"/>
</evidence>
<evidence type="ECO:0000305" key="18"/>
<name>REST_MOUSE</name>
<dbReference type="EMBL" id="AB024496">
    <property type="protein sequence ID" value="BAB82460.1"/>
    <property type="molecule type" value="mRNA"/>
</dbReference>
<dbReference type="EMBL" id="DQ644039">
    <property type="protein sequence ID" value="ABG35129.1"/>
    <property type="molecule type" value="mRNA"/>
</dbReference>
<dbReference type="EMBL" id="BC127065">
    <property type="protein sequence ID" value="AAI27066.1"/>
    <property type="molecule type" value="mRNA"/>
</dbReference>
<dbReference type="EMBL" id="BC096434">
    <property type="protein sequence ID" value="AAH96434.1"/>
    <property type="status" value="ALT_SEQ"/>
    <property type="molecule type" value="mRNA"/>
</dbReference>
<dbReference type="EMBL" id="AK004945">
    <property type="protein sequence ID" value="BAB23689.3"/>
    <property type="molecule type" value="mRNA"/>
</dbReference>
<dbReference type="EMBL" id="AK156514">
    <property type="protein sequence ID" value="BAE33741.1"/>
    <property type="molecule type" value="mRNA"/>
</dbReference>
<dbReference type="CCDS" id="CCDS19372.1">
    <molecule id="Q8VIG1-1"/>
</dbReference>
<dbReference type="RefSeq" id="NP_035393.2">
    <molecule id="Q8VIG1-1"/>
    <property type="nucleotide sequence ID" value="NM_011263.2"/>
</dbReference>
<dbReference type="RefSeq" id="XP_006534905.1">
    <molecule id="Q8VIG1-1"/>
    <property type="nucleotide sequence ID" value="XM_006534842.5"/>
</dbReference>
<dbReference type="RefSeq" id="XP_036020819.1">
    <molecule id="Q8VIG1-2"/>
    <property type="nucleotide sequence ID" value="XM_036164926.1"/>
</dbReference>
<dbReference type="BMRB" id="Q8VIG1"/>
<dbReference type="SMR" id="Q8VIG1"/>
<dbReference type="BioGRID" id="202864">
    <property type="interactions" value="9"/>
</dbReference>
<dbReference type="FunCoup" id="Q8VIG1">
    <property type="interactions" value="2230"/>
</dbReference>
<dbReference type="IntAct" id="Q8VIG1">
    <property type="interactions" value="7"/>
</dbReference>
<dbReference type="MINT" id="Q8VIG1"/>
<dbReference type="STRING" id="10090.ENSMUSP00000079231"/>
<dbReference type="GlyGen" id="Q8VIG1">
    <property type="glycosylation" value="6 sites, 1 O-linked glycan (1 site)"/>
</dbReference>
<dbReference type="iPTMnet" id="Q8VIG1"/>
<dbReference type="PhosphoSitePlus" id="Q8VIG1"/>
<dbReference type="jPOST" id="Q8VIG1"/>
<dbReference type="PaxDb" id="10090-ENSMUSP00000079231"/>
<dbReference type="PeptideAtlas" id="Q8VIG1"/>
<dbReference type="ProteomicsDB" id="254914">
    <molecule id="Q8VIG1-1"/>
</dbReference>
<dbReference type="ProteomicsDB" id="254915">
    <molecule id="Q8VIG1-2"/>
</dbReference>
<dbReference type="ProteomicsDB" id="254916">
    <molecule id="Q8VIG1-3"/>
</dbReference>
<dbReference type="Pumba" id="Q8VIG1"/>
<dbReference type="Antibodypedia" id="1755">
    <property type="antibodies" value="289 antibodies from 37 providers"/>
</dbReference>
<dbReference type="DNASU" id="19712"/>
<dbReference type="Ensembl" id="ENSMUST00000080359.12">
    <molecule id="Q8VIG1-1"/>
    <property type="protein sequence ID" value="ENSMUSP00000079231.6"/>
    <property type="gene ID" value="ENSMUSG00000029249.16"/>
</dbReference>
<dbReference type="Ensembl" id="ENSMUST00000113449.2">
    <molecule id="Q8VIG1-1"/>
    <property type="protein sequence ID" value="ENSMUSP00000109076.2"/>
    <property type="gene ID" value="ENSMUSG00000029249.16"/>
</dbReference>
<dbReference type="GeneID" id="19712"/>
<dbReference type="KEGG" id="mmu:19712"/>
<dbReference type="UCSC" id="uc008xvz.2">
    <molecule id="Q8VIG1-1"/>
    <property type="organism name" value="mouse"/>
</dbReference>
<dbReference type="AGR" id="MGI:104897"/>
<dbReference type="CTD" id="5978"/>
<dbReference type="MGI" id="MGI:104897">
    <property type="gene designation" value="Rest"/>
</dbReference>
<dbReference type="VEuPathDB" id="HostDB:ENSMUSG00000029249"/>
<dbReference type="eggNOG" id="KOG1721">
    <property type="taxonomic scope" value="Eukaryota"/>
</dbReference>
<dbReference type="GeneTree" id="ENSGT00940000155341"/>
<dbReference type="HOGENOM" id="CLU_009801_2_0_1"/>
<dbReference type="InParanoid" id="Q8VIG1"/>
<dbReference type="OMA" id="CEMEMDA"/>
<dbReference type="OrthoDB" id="427030at2759"/>
<dbReference type="PhylomeDB" id="Q8VIG1"/>
<dbReference type="TreeFam" id="TF332861"/>
<dbReference type="Reactome" id="R-MMU-3214815">
    <property type="pathway name" value="HDACs deacetylate histones"/>
</dbReference>
<dbReference type="BioGRID-ORCS" id="19712">
    <property type="hits" value="7 hits in 81 CRISPR screens"/>
</dbReference>
<dbReference type="ChiTaRS" id="Rest">
    <property type="organism name" value="mouse"/>
</dbReference>
<dbReference type="PRO" id="PR:Q8VIG1"/>
<dbReference type="Proteomes" id="UP000000589">
    <property type="component" value="Chromosome 5"/>
</dbReference>
<dbReference type="RNAct" id="Q8VIG1">
    <property type="molecule type" value="protein"/>
</dbReference>
<dbReference type="Bgee" id="ENSMUSG00000029249">
    <property type="expression patterns" value="Expressed in external carotid artery and 260 other cell types or tissues"/>
</dbReference>
<dbReference type="GO" id="GO:0005829">
    <property type="term" value="C:cytosol"/>
    <property type="evidence" value="ECO:0000314"/>
    <property type="project" value="UniProtKB"/>
</dbReference>
<dbReference type="GO" id="GO:0005654">
    <property type="term" value="C:nucleoplasm"/>
    <property type="evidence" value="ECO:0007669"/>
    <property type="project" value="Ensembl"/>
</dbReference>
<dbReference type="GO" id="GO:0005634">
    <property type="term" value="C:nucleus"/>
    <property type="evidence" value="ECO:0000314"/>
    <property type="project" value="UniProtKB"/>
</dbReference>
<dbReference type="GO" id="GO:0017053">
    <property type="term" value="C:transcription repressor complex"/>
    <property type="evidence" value="ECO:0000314"/>
    <property type="project" value="UniProtKB"/>
</dbReference>
<dbReference type="GO" id="GO:0003682">
    <property type="term" value="F:chromatin binding"/>
    <property type="evidence" value="ECO:0000314"/>
    <property type="project" value="MGI"/>
</dbReference>
<dbReference type="GO" id="GO:0003677">
    <property type="term" value="F:DNA binding"/>
    <property type="evidence" value="ECO:0000314"/>
    <property type="project" value="MGI"/>
</dbReference>
<dbReference type="GO" id="GO:0003700">
    <property type="term" value="F:DNA-binding transcription factor activity"/>
    <property type="evidence" value="ECO:0000250"/>
    <property type="project" value="UniProtKB"/>
</dbReference>
<dbReference type="GO" id="GO:0001227">
    <property type="term" value="F:DNA-binding transcription repressor activity, RNA polymerase II-specific"/>
    <property type="evidence" value="ECO:0000314"/>
    <property type="project" value="UniProtKB"/>
</dbReference>
<dbReference type="GO" id="GO:0042802">
    <property type="term" value="F:identical protein binding"/>
    <property type="evidence" value="ECO:0000353"/>
    <property type="project" value="UniProtKB"/>
</dbReference>
<dbReference type="GO" id="GO:0000978">
    <property type="term" value="F:RNA polymerase II cis-regulatory region sequence-specific DNA binding"/>
    <property type="evidence" value="ECO:0000250"/>
    <property type="project" value="UniProtKB"/>
</dbReference>
<dbReference type="GO" id="GO:0000979">
    <property type="term" value="F:RNA polymerase II core promoter sequence-specific DNA binding"/>
    <property type="evidence" value="ECO:0000314"/>
    <property type="project" value="MGI"/>
</dbReference>
<dbReference type="GO" id="GO:0061629">
    <property type="term" value="F:RNA polymerase II-specific DNA-binding transcription factor binding"/>
    <property type="evidence" value="ECO:0000353"/>
    <property type="project" value="UniProtKB"/>
</dbReference>
<dbReference type="GO" id="GO:0043565">
    <property type="term" value="F:sequence-specific DNA binding"/>
    <property type="evidence" value="ECO:0000314"/>
    <property type="project" value="UniProtKB"/>
</dbReference>
<dbReference type="GO" id="GO:0000976">
    <property type="term" value="F:transcription cis-regulatory region binding"/>
    <property type="evidence" value="ECO:0000314"/>
    <property type="project" value="UniProtKB"/>
</dbReference>
<dbReference type="GO" id="GO:0008270">
    <property type="term" value="F:zinc ion binding"/>
    <property type="evidence" value="ECO:0007669"/>
    <property type="project" value="UniProtKB-KW"/>
</dbReference>
<dbReference type="GO" id="GO:0060088">
    <property type="term" value="P:auditory receptor cell stereocilium organization"/>
    <property type="evidence" value="ECO:0000315"/>
    <property type="project" value="UniProtKB"/>
</dbReference>
<dbReference type="GO" id="GO:0060379">
    <property type="term" value="P:cardiac muscle cell myoblast differentiation"/>
    <property type="evidence" value="ECO:0000314"/>
    <property type="project" value="UniProtKB"/>
</dbReference>
<dbReference type="GO" id="GO:0071257">
    <property type="term" value="P:cellular response to electrical stimulus"/>
    <property type="evidence" value="ECO:0000250"/>
    <property type="project" value="UniProtKB"/>
</dbReference>
<dbReference type="GO" id="GO:0071385">
    <property type="term" value="P:cellular response to glucocorticoid stimulus"/>
    <property type="evidence" value="ECO:0000250"/>
    <property type="project" value="UniProtKB"/>
</dbReference>
<dbReference type="GO" id="GO:0033554">
    <property type="term" value="P:cellular response to stress"/>
    <property type="evidence" value="ECO:0000314"/>
    <property type="project" value="MGI"/>
</dbReference>
<dbReference type="GO" id="GO:0006338">
    <property type="term" value="P:chromatin remodeling"/>
    <property type="evidence" value="ECO:0000250"/>
    <property type="project" value="UniProtKB"/>
</dbReference>
<dbReference type="GO" id="GO:0050910">
    <property type="term" value="P:detection of mechanical stimulus involved in sensory perception of sound"/>
    <property type="evidence" value="ECO:0000315"/>
    <property type="project" value="UniProtKB"/>
</dbReference>
<dbReference type="GO" id="GO:0002244">
    <property type="term" value="P:hematopoietic progenitor cell differentiation"/>
    <property type="evidence" value="ECO:0000315"/>
    <property type="project" value="MGI"/>
</dbReference>
<dbReference type="GO" id="GO:0099563">
    <property type="term" value="P:modification of synaptic structure"/>
    <property type="evidence" value="ECO:0000250"/>
    <property type="project" value="UniProtKB"/>
</dbReference>
<dbReference type="GO" id="GO:0043922">
    <property type="term" value="P:negative regulation by host of viral transcription"/>
    <property type="evidence" value="ECO:0000250"/>
    <property type="project" value="UniProtKB"/>
</dbReference>
<dbReference type="GO" id="GO:0032348">
    <property type="term" value="P:negative regulation of aldosterone biosynthetic process"/>
    <property type="evidence" value="ECO:0000250"/>
    <property type="project" value="UniProtKB"/>
</dbReference>
<dbReference type="GO" id="GO:2000798">
    <property type="term" value="P:negative regulation of amniotic stem cell differentiation"/>
    <property type="evidence" value="ECO:0000250"/>
    <property type="project" value="UniProtKB"/>
</dbReference>
<dbReference type="GO" id="GO:0045955">
    <property type="term" value="P:negative regulation of calcium ion-dependent exocytosis"/>
    <property type="evidence" value="ECO:0000250"/>
    <property type="project" value="UniProtKB"/>
</dbReference>
<dbReference type="GO" id="GO:2000065">
    <property type="term" value="P:negative regulation of cortisol biosynthetic process"/>
    <property type="evidence" value="ECO:0000250"/>
    <property type="project" value="UniProtKB"/>
</dbReference>
<dbReference type="GO" id="GO:2000706">
    <property type="term" value="P:negative regulation of dense core granule biogenesis"/>
    <property type="evidence" value="ECO:0000250"/>
    <property type="project" value="UniProtKB"/>
</dbReference>
<dbReference type="GO" id="GO:0045892">
    <property type="term" value="P:negative regulation of DNA-templated transcription"/>
    <property type="evidence" value="ECO:0000314"/>
    <property type="project" value="UniProtKB"/>
</dbReference>
<dbReference type="GO" id="GO:0010629">
    <property type="term" value="P:negative regulation of gene expression"/>
    <property type="evidence" value="ECO:0000314"/>
    <property type="project" value="UniProtKB"/>
</dbReference>
<dbReference type="GO" id="GO:0046676">
    <property type="term" value="P:negative regulation of insulin secretion"/>
    <property type="evidence" value="ECO:0000250"/>
    <property type="project" value="UniProtKB"/>
</dbReference>
<dbReference type="GO" id="GO:1902894">
    <property type="term" value="P:negative regulation of miRNA transcription"/>
    <property type="evidence" value="ECO:0007669"/>
    <property type="project" value="Ensembl"/>
</dbReference>
<dbReference type="GO" id="GO:0050768">
    <property type="term" value="P:negative regulation of neurogenesis"/>
    <property type="evidence" value="ECO:0000316"/>
    <property type="project" value="MGI"/>
</dbReference>
<dbReference type="GO" id="GO:0045665">
    <property type="term" value="P:negative regulation of neuron differentiation"/>
    <property type="evidence" value="ECO:0000314"/>
    <property type="project" value="UniProtKB"/>
</dbReference>
<dbReference type="GO" id="GO:0000122">
    <property type="term" value="P:negative regulation of transcription by RNA polymerase II"/>
    <property type="evidence" value="ECO:0000250"/>
    <property type="project" value="UniProtKB"/>
</dbReference>
<dbReference type="GO" id="GO:0050877">
    <property type="term" value="P:nervous system process"/>
    <property type="evidence" value="ECO:0000250"/>
    <property type="project" value="UniProtKB"/>
</dbReference>
<dbReference type="GO" id="GO:0050885">
    <property type="term" value="P:neuromuscular process controlling balance"/>
    <property type="evidence" value="ECO:0000315"/>
    <property type="project" value="UniProtKB"/>
</dbReference>
<dbReference type="GO" id="GO:0097150">
    <property type="term" value="P:neuronal stem cell population maintenance"/>
    <property type="evidence" value="ECO:0000315"/>
    <property type="project" value="UniProtKB"/>
</dbReference>
<dbReference type="GO" id="GO:0045893">
    <property type="term" value="P:positive regulation of DNA-templated transcription"/>
    <property type="evidence" value="ECO:0007669"/>
    <property type="project" value="Ensembl"/>
</dbReference>
<dbReference type="GO" id="GO:0010628">
    <property type="term" value="P:positive regulation of gene expression"/>
    <property type="evidence" value="ECO:0000314"/>
    <property type="project" value="UniProtKB"/>
</dbReference>
<dbReference type="GO" id="GO:0045666">
    <property type="term" value="P:positive regulation of neuron differentiation"/>
    <property type="evidence" value="ECO:0000315"/>
    <property type="project" value="UniProtKB"/>
</dbReference>
<dbReference type="GO" id="GO:0043068">
    <property type="term" value="P:positive regulation of programmed cell death"/>
    <property type="evidence" value="ECO:0000250"/>
    <property type="project" value="UniProtKB"/>
</dbReference>
<dbReference type="GO" id="GO:1902459">
    <property type="term" value="P:positive regulation of stem cell population maintenance"/>
    <property type="evidence" value="ECO:0000250"/>
    <property type="project" value="UniProtKB"/>
</dbReference>
<dbReference type="GO" id="GO:0000381">
    <property type="term" value="P:regulation of alternative mRNA splicing, via spliceosome"/>
    <property type="evidence" value="ECO:0000315"/>
    <property type="project" value="UniProtKB"/>
</dbReference>
<dbReference type="GO" id="GO:0006355">
    <property type="term" value="P:regulation of DNA-templated transcription"/>
    <property type="evidence" value="ECO:0000250"/>
    <property type="project" value="UniProtKB"/>
</dbReference>
<dbReference type="GO" id="GO:0010468">
    <property type="term" value="P:regulation of gene expression"/>
    <property type="evidence" value="ECO:0000314"/>
    <property type="project" value="MGI"/>
</dbReference>
<dbReference type="GO" id="GO:0045667">
    <property type="term" value="P:regulation of osteoblast differentiation"/>
    <property type="evidence" value="ECO:0000315"/>
    <property type="project" value="UniProtKB"/>
</dbReference>
<dbReference type="GO" id="GO:0001666">
    <property type="term" value="P:response to hypoxia"/>
    <property type="evidence" value="ECO:0000250"/>
    <property type="project" value="UniProtKB"/>
</dbReference>
<dbReference type="GO" id="GO:0002931">
    <property type="term" value="P:response to ischemia"/>
    <property type="evidence" value="ECO:0000250"/>
    <property type="project" value="UniProtKB"/>
</dbReference>
<dbReference type="GO" id="GO:0035019">
    <property type="term" value="P:somatic stem cell population maintenance"/>
    <property type="evidence" value="ECO:0000315"/>
    <property type="project" value="UniProtKB"/>
</dbReference>
<dbReference type="FunFam" id="3.30.160.60:FF:002187">
    <property type="entry name" value="RE1-silencing transcription factor"/>
    <property type="match status" value="1"/>
</dbReference>
<dbReference type="FunFam" id="3.30.160.60:FF:000448">
    <property type="entry name" value="RE1-silencing transcription factor A"/>
    <property type="match status" value="1"/>
</dbReference>
<dbReference type="FunFam" id="3.30.160.60:FF:000662">
    <property type="entry name" value="RE1-silencing transcription factor A"/>
    <property type="match status" value="1"/>
</dbReference>
<dbReference type="FunFam" id="3.30.160.60:FF:000805">
    <property type="entry name" value="RE1-silencing transcription factor B"/>
    <property type="match status" value="1"/>
</dbReference>
<dbReference type="FunFam" id="3.30.160.60:FF:000952">
    <property type="entry name" value="RE1-silencing transcription factor B"/>
    <property type="match status" value="1"/>
</dbReference>
<dbReference type="Gene3D" id="3.30.160.60">
    <property type="entry name" value="Classic Zinc Finger"/>
    <property type="match status" value="5"/>
</dbReference>
<dbReference type="InterPro" id="IPR050688">
    <property type="entry name" value="Zinc_finger/UBP_domain"/>
</dbReference>
<dbReference type="InterPro" id="IPR036236">
    <property type="entry name" value="Znf_C2H2_sf"/>
</dbReference>
<dbReference type="InterPro" id="IPR013087">
    <property type="entry name" value="Znf_C2H2_type"/>
</dbReference>
<dbReference type="PANTHER" id="PTHR24403:SF102">
    <property type="entry name" value="RE1-SILENCING TRANSCRIPTION FACTOR"/>
    <property type="match status" value="1"/>
</dbReference>
<dbReference type="PANTHER" id="PTHR24403">
    <property type="entry name" value="ZINC FINGER PROTEIN"/>
    <property type="match status" value="1"/>
</dbReference>
<dbReference type="Pfam" id="PF00096">
    <property type="entry name" value="zf-C2H2"/>
    <property type="match status" value="1"/>
</dbReference>
<dbReference type="Pfam" id="PF24540">
    <property type="entry name" value="zf-C2H2_REST"/>
    <property type="match status" value="1"/>
</dbReference>
<dbReference type="SMART" id="SM00355">
    <property type="entry name" value="ZnF_C2H2"/>
    <property type="match status" value="9"/>
</dbReference>
<dbReference type="SUPFAM" id="SSF57667">
    <property type="entry name" value="beta-beta-alpha zinc fingers"/>
    <property type="match status" value="3"/>
</dbReference>
<dbReference type="PROSITE" id="PS00028">
    <property type="entry name" value="ZINC_FINGER_C2H2_1"/>
    <property type="match status" value="1"/>
</dbReference>
<dbReference type="PROSITE" id="PS50157">
    <property type="entry name" value="ZINC_FINGER_C2H2_2"/>
    <property type="match status" value="6"/>
</dbReference>
<sequence length="1082" mass="117784">MATQVMGQSSGGGSLFNNSANMGMALTNDMYDLHELSKAELAAPQLIMLANVALTGEASGSCCDYLVGEERQMAELMPVGDNHFSESEGEGLEESADLKGLENMELGSLELSAVEPQPVFEASAAPEIYSANKDPAPETPVAEDKCRSSKAKPFRCKPCQYEAESEEQFVHHIRIHSAKKFFVEESAEKQAKAWESGSSPAEEGEFSKGPIRCDRCGYNTNRYDHYMAHLKHHLRAGENERIYKCIICTYTTVSEYHWRKHLRNHFPRKVYTCSKCNYFSDRKNNYVQHVRTHTGERPYKCELCPYSSSQKTHLTRHMRTHSGEKPFKCDQCNYVASNQHEVTRHARQVHNGPKPLNCPHCDYKTADRSNFKKHVELHVNPRQFNCPVCDYAASKKCNLQYHFKSKHPTCPSKTMDVSKVKLKKTKKREADLLNNAVSNEKMENEQTKTKGDVSGKKNEKPVKAVGKDASKEKKPGSSVSVVQVTTRTRKSAVAAETKAAEVKHTDGQTGNNPEKPCKAKKNKRKKDAEAHPSEEPVNEGPVTKKKKKSECKSKIGTNVPKGGGRAEERPGVKKQSASLKKGTKKTPPKTKTSKKGGKLAPKGMGQTEPSSGALAQVGVSPDPALIQAEVTGSGSSQTELPSPMDIAKSEPAQMEVSLTGPPPVEPAQMEPSPAKPPQVEAPTYPQPPQRGPAPPTGPAPPTGPAPPTEPAPPTGLAEMEPSPTEPSQKEPPPSMEPPCPEELPQAEPPPMEDCQKELPSPVEPAQIEVAQTAPTQVQEEPPPVSEPPRVKPTKRSSLRKDRAEKELSLLSEMARQEQVLMGVGLVPVRDSKLLKGNKSAQDPPAPPSPSPKGNSREETPKDQEMVSDGEGTIVFPLKKGGPEEAGESPAELAALKESARVSSSEQNSAMPEGGASHSKCQTGSSGLCDVDTEQKTDTVPMKDSAAEPVSPPTPTVDRDAGSPAVVASPPITLAENESQEIDEDEGIHSHDGSDLSDNMSEGSDDSGLHGARPTPPEATSKNGKAGLAGKVTEGEFVCIFCDRSFRKEKDYSKHLNRHLVNVYFLEEAAEEQEEQEEREEQE</sequence>
<organism>
    <name type="scientific">Mus musculus</name>
    <name type="common">Mouse</name>
    <dbReference type="NCBI Taxonomy" id="10090"/>
    <lineage>
        <taxon>Eukaryota</taxon>
        <taxon>Metazoa</taxon>
        <taxon>Chordata</taxon>
        <taxon>Craniata</taxon>
        <taxon>Vertebrata</taxon>
        <taxon>Euteleostomi</taxon>
        <taxon>Mammalia</taxon>
        <taxon>Eutheria</taxon>
        <taxon>Euarchontoglires</taxon>
        <taxon>Glires</taxon>
        <taxon>Rodentia</taxon>
        <taxon>Myomorpha</taxon>
        <taxon>Muroidea</taxon>
        <taxon>Muridae</taxon>
        <taxon>Murinae</taxon>
        <taxon>Mus</taxon>
        <taxon>Mus</taxon>
    </lineage>
</organism>
<comment type="function">
    <text evidence="1 2 5 6 7 9 10 11 12 13 16">Transcriptional repressor which binds neuron-restrictive silencer element (NRSE) and represses neuronal gene transcription in non-neuronal cells (PubMed:29961578, PubMed:9771705). Restricts the expression of neuronal genes by associating with two distinct corepressors, SIN3A and RCOR1, which in turn recruit histone deacetylase to the promoters of REST-regulated genes (By similarity). Mediates repression by recruiting the BHC complex at RE1/NRSE sites which acts by deacetylating and demethylating specific sites on histones, thereby acting as a chromatin modifier (By similarity). Transcriptional repression by REST-CDYL via the recruitment of histone methyltransferase EHMT2 may be important in transformation suppression (By similarity). Represses the expression of SRRM4 in non-neural cells to prevent the activation of neural-specific splicing events and to prevent production of REST isoform 2 (PubMed:21884984). Repressor activity may be inhibited by forming heterodimers with isoform 2, thereby preventing binding to NRSE or binding to corepressors and leading to derepression of target genes (PubMed:10490617, PubMed:11039732). Also maintains repression of neuronal genes in neural stem cells, and allows transcription and differentiation into neurons by dissociation from RE1/NRSE sites of target genes (PubMed:15907476). Thereby is involved in maintaining the quiescent state of adult neural stem cells and preventing premature differentiation into mature neurons (PubMed:27819263). Plays a role in the developmental switch in synaptic NMDA receptor composition during postnatal development, by repressing GRIN2B expression and thereby altering NMDA receptor properties from containing primarily GRIN2B to primarily GRIN2A subunits (By similarity). Acts as a regulator of osteoblast differentiation (PubMed:25727884). Key repressor of gene expression in hypoxia; represses genes in hypoxia by direct binding to an RE1/NRSE site on their promoter regions (By similarity). May also function in stress resistance in the brain during aging; possibly by regulating expression of genes involved in cell death and in the stress response (PubMed:24670762). Repressor of gene expression in the hippocampus after ischemia by directly binding to RE1/NRSE sites and recruiting SIN3A and RCOR1 to promoters of target genes, thereby promoting changes in chromatin modifications and ischemia-induced cell death (By similarity). After ischemia, might play a role in repression of miR-132 expression in hippocampal neurons, thereby leading to neuronal cell death (By similarity).</text>
</comment>
<comment type="function">
    <molecule>Isoform 2</molecule>
    <text evidence="2 5 6 13">Binds to the 3' region of the neuron-restrictive silencer element (NRSE), with lower affinity than isoform 1 (PubMed:11039732). Exhibits weaker repressor activity compared to isoform 1 (By similarity). May negatively regulate the repressor activity of isoform 1 by binding to isoform 1, thereby preventing its binding to NRSE and leading to derepression of target genes (PubMed:10490617, PubMed:11039732). However, in another study, does not appear to be implicated in repressor activity of a NRSE motif-containing reporter construct nor in inhibitory activity on the isoform 1 transcriptional repressor activity (By similarity). Post-transcriptional inactivation of REST by SRRM4-dependent alternative splicing into isoform 2 is required in mechanosensory hair cells in the inner ear for derepression of neuronal genes, maintenance of hair cells and hearing (PubMed:29961578).</text>
</comment>
<comment type="subunit">
    <text evidence="2 5 6 8">Isoform 1 and isoform 2 form heterodimers (PubMed:10490617). Isoform 2: Forms homodimers and homooligomers; binds to the neuron-restrictive silencer element (NRSE) as monomer (PubMed:11039732). Interacts with SIN3A, SIN3B and RCOR1 (By similarity). Interacts with CDYL (By similarity). Interacts with EHMT1 and EHMT2 only in the presence of CDYL (By similarity). Part of a complex containing at least CDYL, REST, WIZ, SETB1, EHMT1 and EHMT2 (By similarity). Interacts (via zinc-finger DNA-binding domain) with ZFP90 (via N- and C-termini); the interaction inhibits REST repressor activity (PubMed:21284946). Interacts (via C2H2-type zinc finger 5) with PRICKLE1 (By similarity). Interacts with FBXW11 and BTRC (By similarity). Interacts with USP7 (By similarity).</text>
</comment>
<comment type="interaction">
    <interactant intactId="EBI-2312802">
        <id>Q8VIG1</id>
    </interactant>
    <interactant intactId="EBI-27099745">
        <id>Q3U5C7</id>
        <label>Prickle1</label>
    </interactant>
    <organismsDiffer>false</organismsDiffer>
    <experiments>2</experiments>
</comment>
<comment type="interaction">
    <interactant intactId="EBI-2312802">
        <id>Q8VIG1</id>
    </interactant>
    <interactant intactId="EBI-2348662">
        <id>Q96MT3</id>
        <label>PRICKLE1</label>
    </interactant>
    <organismsDiffer>true</organismsDiffer>
    <experiments>4</experiments>
</comment>
<comment type="subcellular location">
    <subcellularLocation>
        <location evidence="7 8 10">Nucleus</location>
    </subcellularLocation>
    <subcellularLocation>
        <location evidence="10">Cytoplasm</location>
    </subcellularLocation>
    <text evidence="2 8">Colocalizes with ZFP90 in the nucleus (PubMed:21284946). In response to hypoxia, there is a more pronounced increase in levels in the nucleus as compared to the cytoplasm (By similarity). In aging neurons, increased levels in the nucleus as compared to the cytoplasm (By similarity).</text>
</comment>
<comment type="subcellular location">
    <molecule>Isoform 2</molecule>
    <subcellularLocation>
        <location evidence="2">Nucleus</location>
    </subcellularLocation>
</comment>
<comment type="alternative products">
    <event type="alternative splicing"/>
    <isoform>
        <id>Q8VIG1-1</id>
        <name>1</name>
        <sequence type="displayed"/>
    </isoform>
    <isoform>
        <id>Q8VIG1-2</id>
        <name>2</name>
        <name>N16</name>
        <name>REST4</name>
        <sequence type="described" ref="VSP_022069 VSP_022071"/>
    </isoform>
    <isoform>
        <id>Q8VIG1-3</id>
        <name>3</name>
        <name>N28</name>
        <sequence type="described" ref="VSP_022070 VSP_022072"/>
    </isoform>
</comment>
<comment type="tissue specificity">
    <text evidence="7 11 12 13 15">Expressed in the hippocampus, including quiescent neuronal progenitor (QNP) cells, transient-amplifying progenitor (TAP) cells, neuroblasts and mature neurons (at protein level) (PubMed:27819263). Expressed in embryonic stem cells (at protein level) (PubMed:15907476). Expressed in many non-neuronal tissues including the heart and liver (PubMed:7871435). Abundantly expressed in osteoblastic lineage cells (PubMed:25727884). Expressed in the spleen, kidney, blood cells, cortex, neocortex and in the utricle, saccule and organ of Corti of the inner ear (PubMed:29961578). Isoform 2: Expressed in the cortex, neocortex and in the utricle, saccule and organ of Corti of the inner ear (PubMed:29961578).</text>
</comment>
<comment type="developmental stage">
    <text evidence="13 14 15 16">Ubiquitously expressed in 8.5 dpc and 9.5 dpc embryos (PubMed:9771705). During embryogenesis, expressed at high levels in non-neuronal and differentiated peripheral nervous tissues, but is not expressed in differentiating neurons in the CNS (PubMed:7697725, PubMed:7871435). Expressed in the neocortex at embryonic stage 14.5 dpc and 16 dpc and in the utricle at 15.5 dpc (PubMed:29961578). Isoform 2: Expressed in the neocortex at embryonic stage 14.5 dpc and 16 dpc and in the utricle and saccule at 16 dpc (PubMed:29961578).</text>
</comment>
<comment type="induction">
    <text evidence="7">Down-regulated in differentiating neurons and mature neurons.</text>
</comment>
<comment type="domain">
    <text evidence="2">The C2H2-type zinc finger 5 is required for nuclear localization.</text>
</comment>
<comment type="PTM">
    <text evidence="6">O-glycosylated.</text>
</comment>
<comment type="PTM">
    <text evidence="2">Phosphorylated; phosphorylation is required for ubiquitination.</text>
</comment>
<comment type="PTM">
    <text evidence="2">Ubiquitinated; ubiquitination is mediated by BTRC and leads to proteasomal degradation in G2 phase (By similarity). Ubiquitination increases during neuronal differentiation (By similarity). Deubiquitinated by USP7; leading to its stabilization and promoting the maintenance of neural progenitor cells (By similarity).</text>
</comment>
<comment type="disruption phenotype">
    <text evidence="10 12 16">Embryonic lethality by embryonic day 11.5 dpc (PubMed:9771705). At 9.25 dpc, disorganization of the head mesenchyme in the midbrain region with separation of myotomal cells from the dermomyotome and widespread apoptotic cell death (PubMed:9771705). Forebrain malformation and widening of the mesencephalic flexure at 9.5 dpc and 10.5 dpc, and growth retardation by 10.5 dpc (PubMed:9771705). Conditional knockout in the nervous system results in a progressive age-related neurodegenerative phenotype (PubMed:24670762). At the age of 1 month, no change of neuronal numbers in the cortex and hippocampus, but at the age of 8 months, neuronal degeneration and apoptosis, accompanied by significant neuronal loss in the cerebral cortex and hippocampus, and pronounced gliosis (PubMed:24670762). In primary 16 dpc cortical neurons, increased degeneration and cell death upon oxidative stress or exposure to oligomeric amyloid-beta 42 (PubMed:24670762). Conditional knockout in QNP cells leads to a higher number of proliferating QNP cells, an increased transition to TAP cells and increased differentiation into mature neurons (PubMed:27819263). Conditional knockdout in proliferating cells leads to a decreased number of proliferating TAP cells and an increase in immature and mature neurons (PubMed:27819263).</text>
</comment>
<comment type="miscellaneous">
    <molecule>Isoform 2</molecule>
    <text evidence="6 13">Produced by SRRM4-dependent alternative splicing in neurons and inner ear hair cells (PubMed:11039732, PubMed:29961578). Lacks the four C-terminal zinc fingers and the RCOR1 corepressor interaction site found in full length REST isoform 1, which are required for full DNA-binding and repressive activity (PubMed:11039732, PubMed:29961578).</text>
</comment>
<comment type="caution">
    <molecule>Isoform 2</molecule>
    <text evidence="2 5 6">Controversial data exists concerning the repressor activity of isoform 2. A study in human showed that human isoform 3 exhibits weak repressor activity of a NRSE motif-containing reporter construct (By similarity). Another report, however, does not observe any isoform 3 transcriptional repressor activity of a NRSE motif-containing reporter construct (By similarity). Controversial data also exists regarding the function of isoform 2 on the negative regulation of full-length REST. It was shown that isoform 2 negatively regulates the repressor activity of isoform 1 by binding to isoform 1, thereby preventing its binding to NRSE and leading to derepression of target genes (PubMed:10490617, PubMed:11039732). Another study in human, however, did not observe any inhibitory activity of human isoform 3 on the isoform 1 repressor activity (By similarity).</text>
</comment>
<comment type="sequence caution" evidence="18">
    <conflict type="miscellaneous discrepancy">
        <sequence resource="EMBL-CDS" id="AAH96434"/>
    </conflict>
    <text>Contaminating sequence. Potential poly-A sequence.</text>
</comment>
<keyword id="KW-0025">Alternative splicing</keyword>
<keyword id="KW-0963">Cytoplasm</keyword>
<keyword id="KW-0479">Metal-binding</keyword>
<keyword id="KW-0539">Nucleus</keyword>
<keyword id="KW-0597">Phosphoprotein</keyword>
<keyword id="KW-1185">Reference proteome</keyword>
<keyword id="KW-0677">Repeat</keyword>
<keyword id="KW-0678">Repressor</keyword>
<keyword id="KW-0804">Transcription</keyword>
<keyword id="KW-0805">Transcription regulation</keyword>
<keyword id="KW-0832">Ubl conjugation</keyword>
<keyword id="KW-0862">Zinc</keyword>
<keyword id="KW-0863">Zinc-finger</keyword>
<proteinExistence type="evidence at protein level"/>
<accession>Q8VIG1</accession>
<accession>A0JNY8</accession>
<accession>Q155C6</accession>
<accession>Q3U0W0</accession>
<accession>Q4VAD6</accession>
<accession>Q9CW43</accession>
<gene>
    <name type="primary">Rest</name>
    <name type="synonym">Nrsf</name>
</gene>
<reference key="1">
    <citation type="submission" date="1999-03" db="EMBL/GenBank/DDBJ databases">
        <title>Alternative promoter and splicing generate multiple isoforms of the neural-restrictive silencer factor NRSF/REST,a general transcriptional repressor for multiple neuron specific genes.</title>
        <authorList>
            <person name="Kojima T."/>
            <person name="Naruse Y."/>
            <person name="Mori N."/>
        </authorList>
    </citation>
    <scope>NUCLEOTIDE SEQUENCE [MRNA] (ISOFORM 1)</scope>
    <source>
        <strain>129</strain>
    </source>
</reference>
<reference key="2">
    <citation type="submission" date="2006-05" db="EMBL/GenBank/DDBJ databases">
        <title>Cloning of the REST4 splice variant of the mouse REST protein.</title>
        <authorList>
            <person name="Puhl H.L. III"/>
            <person name="Ikeda S.R."/>
        </authorList>
    </citation>
    <scope>NUCLEOTIDE SEQUENCE [MRNA] (ISOFORM 2)</scope>
    <source>
        <tissue>Neuroblastoma</tissue>
    </source>
</reference>
<reference key="3">
    <citation type="journal article" date="2004" name="Genome Res.">
        <title>The status, quality, and expansion of the NIH full-length cDNA project: the Mammalian Gene Collection (MGC).</title>
        <authorList>
            <consortium name="The MGC Project Team"/>
        </authorList>
    </citation>
    <scope>NUCLEOTIDE SEQUENCE [LARGE SCALE MRNA] (ISOFORM 1)</scope>
    <source>
        <strain>FVB/N-3</strain>
        <tissue>Mammary tumor</tissue>
    </source>
</reference>
<reference key="4">
    <citation type="journal article" date="2005" name="Science">
        <title>The transcriptional landscape of the mammalian genome.</title>
        <authorList>
            <person name="Carninci P."/>
            <person name="Kasukawa T."/>
            <person name="Katayama S."/>
            <person name="Gough J."/>
            <person name="Frith M.C."/>
            <person name="Maeda N."/>
            <person name="Oyama R."/>
            <person name="Ravasi T."/>
            <person name="Lenhard B."/>
            <person name="Wells C."/>
            <person name="Kodzius R."/>
            <person name="Shimokawa K."/>
            <person name="Bajic V.B."/>
            <person name="Brenner S.E."/>
            <person name="Batalov S."/>
            <person name="Forrest A.R."/>
            <person name="Zavolan M."/>
            <person name="Davis M.J."/>
            <person name="Wilming L.G."/>
            <person name="Aidinis V."/>
            <person name="Allen J.E."/>
            <person name="Ambesi-Impiombato A."/>
            <person name="Apweiler R."/>
            <person name="Aturaliya R.N."/>
            <person name="Bailey T.L."/>
            <person name="Bansal M."/>
            <person name="Baxter L."/>
            <person name="Beisel K.W."/>
            <person name="Bersano T."/>
            <person name="Bono H."/>
            <person name="Chalk A.M."/>
            <person name="Chiu K.P."/>
            <person name="Choudhary V."/>
            <person name="Christoffels A."/>
            <person name="Clutterbuck D.R."/>
            <person name="Crowe M.L."/>
            <person name="Dalla E."/>
            <person name="Dalrymple B.P."/>
            <person name="de Bono B."/>
            <person name="Della Gatta G."/>
            <person name="di Bernardo D."/>
            <person name="Down T."/>
            <person name="Engstrom P."/>
            <person name="Fagiolini M."/>
            <person name="Faulkner G."/>
            <person name="Fletcher C.F."/>
            <person name="Fukushima T."/>
            <person name="Furuno M."/>
            <person name="Futaki S."/>
            <person name="Gariboldi M."/>
            <person name="Georgii-Hemming P."/>
            <person name="Gingeras T.R."/>
            <person name="Gojobori T."/>
            <person name="Green R.E."/>
            <person name="Gustincich S."/>
            <person name="Harbers M."/>
            <person name="Hayashi Y."/>
            <person name="Hensch T.K."/>
            <person name="Hirokawa N."/>
            <person name="Hill D."/>
            <person name="Huminiecki L."/>
            <person name="Iacono M."/>
            <person name="Ikeo K."/>
            <person name="Iwama A."/>
            <person name="Ishikawa T."/>
            <person name="Jakt M."/>
            <person name="Kanapin A."/>
            <person name="Katoh M."/>
            <person name="Kawasawa Y."/>
            <person name="Kelso J."/>
            <person name="Kitamura H."/>
            <person name="Kitano H."/>
            <person name="Kollias G."/>
            <person name="Krishnan S.P."/>
            <person name="Kruger A."/>
            <person name="Kummerfeld S.K."/>
            <person name="Kurochkin I.V."/>
            <person name="Lareau L.F."/>
            <person name="Lazarevic D."/>
            <person name="Lipovich L."/>
            <person name="Liu J."/>
            <person name="Liuni S."/>
            <person name="McWilliam S."/>
            <person name="Madan Babu M."/>
            <person name="Madera M."/>
            <person name="Marchionni L."/>
            <person name="Matsuda H."/>
            <person name="Matsuzawa S."/>
            <person name="Miki H."/>
            <person name="Mignone F."/>
            <person name="Miyake S."/>
            <person name="Morris K."/>
            <person name="Mottagui-Tabar S."/>
            <person name="Mulder N."/>
            <person name="Nakano N."/>
            <person name="Nakauchi H."/>
            <person name="Ng P."/>
            <person name="Nilsson R."/>
            <person name="Nishiguchi S."/>
            <person name="Nishikawa S."/>
            <person name="Nori F."/>
            <person name="Ohara O."/>
            <person name="Okazaki Y."/>
            <person name="Orlando V."/>
            <person name="Pang K.C."/>
            <person name="Pavan W.J."/>
            <person name="Pavesi G."/>
            <person name="Pesole G."/>
            <person name="Petrovsky N."/>
            <person name="Piazza S."/>
            <person name="Reed J."/>
            <person name="Reid J.F."/>
            <person name="Ring B.Z."/>
            <person name="Ringwald M."/>
            <person name="Rost B."/>
            <person name="Ruan Y."/>
            <person name="Salzberg S.L."/>
            <person name="Sandelin A."/>
            <person name="Schneider C."/>
            <person name="Schoenbach C."/>
            <person name="Sekiguchi K."/>
            <person name="Semple C.A."/>
            <person name="Seno S."/>
            <person name="Sessa L."/>
            <person name="Sheng Y."/>
            <person name="Shibata Y."/>
            <person name="Shimada H."/>
            <person name="Shimada K."/>
            <person name="Silva D."/>
            <person name="Sinclair B."/>
            <person name="Sperling S."/>
            <person name="Stupka E."/>
            <person name="Sugiura K."/>
            <person name="Sultana R."/>
            <person name="Takenaka Y."/>
            <person name="Taki K."/>
            <person name="Tammoja K."/>
            <person name="Tan S.L."/>
            <person name="Tang S."/>
            <person name="Taylor M.S."/>
            <person name="Tegner J."/>
            <person name="Teichmann S.A."/>
            <person name="Ueda H.R."/>
            <person name="van Nimwegen E."/>
            <person name="Verardo R."/>
            <person name="Wei C.L."/>
            <person name="Yagi K."/>
            <person name="Yamanishi H."/>
            <person name="Zabarovsky E."/>
            <person name="Zhu S."/>
            <person name="Zimmer A."/>
            <person name="Hide W."/>
            <person name="Bult C."/>
            <person name="Grimmond S.M."/>
            <person name="Teasdale R.D."/>
            <person name="Liu E.T."/>
            <person name="Brusic V."/>
            <person name="Quackenbush J."/>
            <person name="Wahlestedt C."/>
            <person name="Mattick J.S."/>
            <person name="Hume D.A."/>
            <person name="Kai C."/>
            <person name="Sasaki D."/>
            <person name="Tomaru Y."/>
            <person name="Fukuda S."/>
            <person name="Kanamori-Katayama M."/>
            <person name="Suzuki M."/>
            <person name="Aoki J."/>
            <person name="Arakawa T."/>
            <person name="Iida J."/>
            <person name="Imamura K."/>
            <person name="Itoh M."/>
            <person name="Kato T."/>
            <person name="Kawaji H."/>
            <person name="Kawagashira N."/>
            <person name="Kawashima T."/>
            <person name="Kojima M."/>
            <person name="Kondo S."/>
            <person name="Konno H."/>
            <person name="Nakano K."/>
            <person name="Ninomiya N."/>
            <person name="Nishio T."/>
            <person name="Okada M."/>
            <person name="Plessy C."/>
            <person name="Shibata K."/>
            <person name="Shiraki T."/>
            <person name="Suzuki S."/>
            <person name="Tagami M."/>
            <person name="Waki K."/>
            <person name="Watahiki A."/>
            <person name="Okamura-Oho Y."/>
            <person name="Suzuki H."/>
            <person name="Kawai J."/>
            <person name="Hayashizaki Y."/>
        </authorList>
    </citation>
    <scope>NUCLEOTIDE SEQUENCE [LARGE SCALE MRNA] OF 1-853 (ISOFORM 1)</scope>
    <source>
        <strain>C57BL/6J</strain>
        <strain>NOD</strain>
        <tissue>Liver</tissue>
        <tissue>Spleen</tissue>
    </source>
</reference>
<reference key="5">
    <citation type="journal article" date="1995" name="Cell">
        <title>REST: a mammalian silencer protein that restricts sodium channel gene expression to neurons.</title>
        <authorList>
            <person name="Chong J.A."/>
            <person name="Tapia-Ramirez J."/>
            <person name="Kim S."/>
            <person name="Toledo-Aral J.J."/>
            <person name="Zheng Y."/>
            <person name="Boutros M.C."/>
            <person name="Altshuller Y.M."/>
            <person name="Frohman M.A."/>
            <person name="Kraner S.D."/>
            <person name="Mandel G."/>
        </authorList>
    </citation>
    <scope>DEVELOPMENTAL STAGE</scope>
</reference>
<reference key="6">
    <citation type="journal article" date="1995" name="Science">
        <title>The neuron-restrictive silencer factor (NRSF): a coordinate repressor of multiple neuron-specific genes.</title>
        <authorList>
            <person name="Schoenherr C.J."/>
            <person name="Anderson D.J."/>
        </authorList>
    </citation>
    <scope>TISSUE SPECIFICITY</scope>
    <scope>DEVELOPMENTAL STAGE</scope>
</reference>
<reference key="7">
    <citation type="journal article" date="1998" name="Nat. Genet.">
        <title>NRSF/REST is required in vivo for repression of multiple neuronal target genes during embryogenesis.</title>
        <authorList>
            <person name="Chen Z.F."/>
            <person name="Paquette A.J."/>
            <person name="Anderson D.J."/>
        </authorList>
    </citation>
    <scope>FUNCTION</scope>
    <scope>DEVELOPMENTAL STAGE</scope>
    <scope>DISRUPTION PHENOTYPE</scope>
</reference>
<reference key="8">
    <citation type="journal article" date="1999" name="Brain Res. Mol. Brain Res.">
        <title>Neuron-specific splicing of zinc finger transcription factor REST/NRSF/XBR is frequent in neuroblastomas and conserved in human, mouse and rat.</title>
        <authorList>
            <person name="Palm K."/>
            <person name="Metsis M."/>
            <person name="Timmusk T."/>
        </authorList>
    </citation>
    <scope>ALTERNATIVE SPLICING (ISOFORMS 2 AND 3)</scope>
</reference>
<reference key="9">
    <citation type="journal article" date="1999" name="Mol. Cell. Biol.">
        <title>Protein kinase A regulates cholinergic gene expression in PC12 cells: REST4 silences the silencing activity of neuron-restrictive silencer factor/REST.</title>
        <authorList>
            <person name="Shimojo M."/>
            <person name="Paquette A.J."/>
            <person name="Anderson D.J."/>
            <person name="Hersh L.B."/>
        </authorList>
    </citation>
    <scope>FUNCTION</scope>
    <scope>SUBUNIT</scope>
</reference>
<reference key="10">
    <citation type="journal article" date="2000" name="Brain Res. Mol. Brain Res.">
        <title>Studies on the interaction of REST4 with the cholinergic repressor element-1/neuron restrictive silencer element.</title>
        <authorList>
            <person name="Lee J.H."/>
            <person name="Shimojo M."/>
            <person name="Chai Y.G."/>
            <person name="Hersh L.B."/>
        </authorList>
    </citation>
    <scope>FUNCTION</scope>
    <scope>SUBUNIT (ISOFORM 2)</scope>
    <scope>GLYCOSYLATION</scope>
    <scope>MUTAGENESIS OF 1-MET--GLY-209 AND 243-TYR--HIS-265</scope>
</reference>
<reference key="11">
    <citation type="journal article" date="2005" name="Cell">
        <title>REST and its corepressors mediate plasticity of neuronal gene chromatin throughout neurogenesis.</title>
        <authorList>
            <person name="Ballas N."/>
            <person name="Grunseich C."/>
            <person name="Lu D.D."/>
            <person name="Speh J.C."/>
            <person name="Mandel G."/>
        </authorList>
    </citation>
    <scope>SUBCELLULAR LOCATION</scope>
    <scope>TISSUE SPECIFICITY</scope>
    <scope>INDUCTION</scope>
</reference>
<reference key="12">
    <citation type="journal article" date="2011" name="J. Mol. Cell. Cardiol.">
        <title>Zinc-finger protein 90 negatively regulates neuron-restrictive silencer factor-mediated transcriptional repression of fetal cardiac genes.</title>
        <authorList>
            <person name="Hata L."/>
            <person name="Murakami M."/>
            <person name="Kuwahara K."/>
            <person name="Nakagawa Y."/>
            <person name="Kinoshita H."/>
            <person name="Usami S."/>
            <person name="Yasuno S."/>
            <person name="Fujiwara M."/>
            <person name="Kuwabara Y."/>
            <person name="Minami T."/>
            <person name="Yamada Y."/>
            <person name="Yamada C."/>
            <person name="Nakao K."/>
            <person name="Ueshima K."/>
            <person name="Nishikimi T."/>
            <person name="Nakao K."/>
        </authorList>
    </citation>
    <scope>INTERACTION WITH ZFP90</scope>
    <scope>SUBCELLULAR LOCATION</scope>
</reference>
<reference key="13">
    <citation type="journal article" date="2011" name="Mol. Cell">
        <title>Cross-regulation between an alternative splicing activator and a transcription repressor controls neurogenesis.</title>
        <authorList>
            <person name="Raj B."/>
            <person name="O'Hanlon D."/>
            <person name="Vessey J.P."/>
            <person name="Pan Q."/>
            <person name="Ray D."/>
            <person name="Buckley N.J."/>
            <person name="Miller F.D."/>
            <person name="Blencowe B.J."/>
        </authorList>
    </citation>
    <scope>FUNCTION</scope>
</reference>
<reference key="14">
    <citation type="journal article" date="2014" name="Nature">
        <title>REST and stress resistance in ageing and Alzheimer's disease.</title>
        <authorList>
            <person name="Lu T."/>
            <person name="Aron L."/>
            <person name="Zullo J."/>
            <person name="Pan Y."/>
            <person name="Kim H."/>
            <person name="Chen Y."/>
            <person name="Yang T.H."/>
            <person name="Kim H.M."/>
            <person name="Drake D."/>
            <person name="Liu X.S."/>
            <person name="Bennett D.A."/>
            <person name="Colaiacovo M.P."/>
            <person name="Yankner B.A."/>
        </authorList>
    </citation>
    <scope>FUNCTION</scope>
    <scope>SUBCELLULAR LOCATION</scope>
    <scope>DISRUPTION PHENOTYPE</scope>
</reference>
<reference key="15">
    <citation type="journal article" date="2015" name="J. Cell. Biochem.">
        <title>RE1-silencing transcription factor (Rest) is a novel regulator of osteoblast differentiation.</title>
        <authorList>
            <person name="Liu B."/>
            <person name="Cheng S."/>
            <person name="Xing W."/>
            <person name="Pourteymoor S."/>
            <person name="Mohan S."/>
        </authorList>
    </citation>
    <scope>FUNCTION</scope>
    <scope>TISSUE SPECIFICITY</scope>
</reference>
<reference key="16">
    <citation type="journal article" date="2016" name="Nat. Commun.">
        <title>REST regulation of gene networks in adult neural stem cells.</title>
        <authorList>
            <person name="Mukherjee S."/>
            <person name="Brulet R."/>
            <person name="Zhang L."/>
            <person name="Hsieh J."/>
        </authorList>
    </citation>
    <scope>FUNCTION</scope>
    <scope>TISSUE SPECIFICITY</scope>
    <scope>DISRUPTION PHENOTYPE</scope>
</reference>
<reference key="17">
    <citation type="journal article" date="2018" name="Cell">
        <title>Defects in the Alternative Splicing-Dependent Regulation of REST Cause Deafness.</title>
        <authorList>
            <person name="Nakano Y."/>
            <person name="Kelly M.C."/>
            <person name="Rehman A.U."/>
            <person name="Boger E.T."/>
            <person name="Morell R.J."/>
            <person name="Kelley M.W."/>
            <person name="Friedman T.B."/>
            <person name="Banfi B."/>
        </authorList>
    </citation>
    <scope>FUNCTION</scope>
    <scope>ALTERNATIVE SPLICING (ISOFORM 2)</scope>
    <scope>TISSUE SPECIFICITY (ISOFORM 1 AND 2)</scope>
    <scope>DEVELOPMENTAL STAGE</scope>
</reference>
<protein>
    <recommendedName>
        <fullName>RE1-silencing transcription factor</fullName>
    </recommendedName>
    <alternativeName>
        <fullName>Neural-restrictive silencer factor</fullName>
    </alternativeName>
</protein>
<feature type="chain" id="PRO_0000269548" description="RE1-silencing transcription factor">
    <location>
        <begin position="1"/>
        <end position="1082"/>
    </location>
</feature>
<feature type="zinc finger region" description="C2H2-type 1" evidence="3">
    <location>
        <begin position="154"/>
        <end position="176"/>
    </location>
</feature>
<feature type="zinc finger region" description="C2H2-type 2" evidence="3">
    <location>
        <begin position="211"/>
        <end position="235"/>
    </location>
</feature>
<feature type="zinc finger region" description="C2H2-type 3" evidence="3">
    <location>
        <begin position="243"/>
        <end position="265"/>
    </location>
</feature>
<feature type="zinc finger region" description="C2H2-type 4" evidence="3">
    <location>
        <begin position="271"/>
        <end position="293"/>
    </location>
</feature>
<feature type="zinc finger region" description="C2H2-type 5" evidence="3">
    <location>
        <begin position="299"/>
        <end position="321"/>
    </location>
</feature>
<feature type="zinc finger region" description="C2H2-type 6" evidence="3">
    <location>
        <begin position="327"/>
        <end position="350"/>
    </location>
</feature>
<feature type="zinc finger region" description="C2H2-type 7" evidence="3">
    <location>
        <begin position="356"/>
        <end position="378"/>
    </location>
</feature>
<feature type="zinc finger region" description="C2H2-type 8" evidence="3">
    <location>
        <begin position="384"/>
        <end position="407"/>
    </location>
</feature>
<feature type="zinc finger region" description="C2H2-type 9" evidence="3">
    <location>
        <begin position="1036"/>
        <end position="1058"/>
    </location>
</feature>
<feature type="region of interest" description="Interaction with SIN3A" evidence="2">
    <location>
        <begin position="32"/>
        <end position="117"/>
    </location>
</feature>
<feature type="region of interest" description="Interaction with SIN3B" evidence="2">
    <location>
        <begin position="43"/>
        <end position="57"/>
    </location>
</feature>
<feature type="region of interest" description="Interaction with ZFP90" evidence="2">
    <location>
        <begin position="140"/>
        <end position="413"/>
    </location>
</feature>
<feature type="region of interest" description="Required for binding to the neuron-restrictive silencer element" evidence="6">
    <location>
        <begin position="196"/>
        <end position="207"/>
    </location>
</feature>
<feature type="region of interest" description="Disordered" evidence="4">
    <location>
        <begin position="408"/>
        <end position="809"/>
    </location>
</feature>
<feature type="region of interest" description="Disordered" evidence="4">
    <location>
        <begin position="831"/>
        <end position="1027"/>
    </location>
</feature>
<feature type="region of interest" description="Interaction with RCOR1" evidence="2">
    <location>
        <begin position="985"/>
        <end position="1063"/>
    </location>
</feature>
<feature type="compositionally biased region" description="Basic and acidic residues" evidence="4">
    <location>
        <begin position="440"/>
        <end position="475"/>
    </location>
</feature>
<feature type="compositionally biased region" description="Low complexity" evidence="4">
    <location>
        <begin position="477"/>
        <end position="497"/>
    </location>
</feature>
<feature type="compositionally biased region" description="Basic residues" evidence="4">
    <location>
        <begin position="581"/>
        <end position="597"/>
    </location>
</feature>
<feature type="compositionally biased region" description="Polar residues" evidence="4">
    <location>
        <begin position="630"/>
        <end position="640"/>
    </location>
</feature>
<feature type="compositionally biased region" description="Pro residues" evidence="4">
    <location>
        <begin position="684"/>
        <end position="713"/>
    </location>
</feature>
<feature type="compositionally biased region" description="Pro residues" evidence="4">
    <location>
        <begin position="729"/>
        <end position="751"/>
    </location>
</feature>
<feature type="compositionally biased region" description="Basic and acidic residues" evidence="4">
    <location>
        <begin position="798"/>
        <end position="807"/>
    </location>
</feature>
<feature type="compositionally biased region" description="Basic and acidic residues" evidence="4">
    <location>
        <begin position="854"/>
        <end position="864"/>
    </location>
</feature>
<feature type="compositionally biased region" description="Polar residues" evidence="4">
    <location>
        <begin position="900"/>
        <end position="909"/>
    </location>
</feature>
<feature type="modified residue" description="Phosphoserine" evidence="1">
    <location>
        <position position="950"/>
    </location>
</feature>
<feature type="splice variant" id="VSP_022069" description="In isoform 2." evidence="17">
    <original>GEKPFK</original>
    <variation>ECDLAG</variation>
    <location>
        <begin position="323"/>
        <end position="328"/>
    </location>
</feature>
<feature type="splice variant" id="VSP_022070" description="In isoform 3." evidence="18">
    <original>EKPFKCDQC</original>
    <variation>CDLVGYVFR</variation>
    <location>
        <begin position="324"/>
        <end position="332"/>
    </location>
</feature>
<feature type="splice variant" id="VSP_022071" description="In isoform 2." evidence="17">
    <location>
        <begin position="329"/>
        <end position="1082"/>
    </location>
</feature>
<feature type="splice variant" id="VSP_022072" description="In isoform 3." evidence="18">
    <location>
        <begin position="333"/>
        <end position="1082"/>
    </location>
</feature>
<feature type="mutagenesis site" description="Abolished binding to neuron-restrictive silencer element." evidence="6">
    <location>
        <begin position="1"/>
        <end position="209"/>
    </location>
</feature>
<feature type="mutagenesis site" description="Decreased binding to neuron-restrictive silencer element." evidence="6">
    <location>
        <begin position="1"/>
        <end position="194"/>
    </location>
</feature>
<feature type="mutagenesis site" description="Decreased binding to neuron-restrictive silencer element." evidence="6">
    <location>
        <begin position="1"/>
        <end position="176"/>
    </location>
</feature>
<feature type="mutagenesis site" description="Decreased binding to neuron-restrictive silencer element." evidence="6">
    <location>
        <begin position="1"/>
        <end position="152"/>
    </location>
</feature>
<feature type="mutagenesis site" description="Increased binding to neuron-restrictive silencer element." evidence="6">
    <location>
        <begin position="1"/>
        <end position="86"/>
    </location>
</feature>
<feature type="mutagenesis site" description="Abolished binding to neuron-restrictive silencer element." evidence="6">
    <location>
        <begin position="196"/>
        <end position="207"/>
    </location>
</feature>
<feature type="mutagenesis site" description="Abolished binding to neuron-restrictive silencer element." evidence="6">
    <location>
        <begin position="243"/>
        <end position="265"/>
    </location>
</feature>
<feature type="sequence conflict" description="In Ref. 1; BAB82460." evidence="18" ref="1">
    <original>T</original>
    <variation>R</variation>
    <location>
        <position position="414"/>
    </location>
</feature>
<feature type="sequence conflict" description="In Ref. 1; BAB82460." evidence="18" ref="1">
    <original>T</original>
    <variation>S</variation>
    <location>
        <position position="485"/>
    </location>
</feature>
<feature type="sequence conflict" description="In Ref. 1; BAB82460." evidence="18" ref="1">
    <original>G</original>
    <variation>S</variation>
    <location>
        <position position="556"/>
    </location>
</feature>
<feature type="sequence conflict" description="In Ref. 1; BAB82460." evidence="18" ref="1">
    <original>K</original>
    <variation>N</variation>
    <location>
        <position position="584"/>
    </location>
</feature>